<reference key="1">
    <citation type="journal article" date="2008" name="J. Bacteriol.">
        <title>The pangenome structure of Escherichia coli: comparative genomic analysis of E. coli commensal and pathogenic isolates.</title>
        <authorList>
            <person name="Rasko D.A."/>
            <person name="Rosovitz M.J."/>
            <person name="Myers G.S.A."/>
            <person name="Mongodin E.F."/>
            <person name="Fricke W.F."/>
            <person name="Gajer P."/>
            <person name="Crabtree J."/>
            <person name="Sebaihia M."/>
            <person name="Thomson N.R."/>
            <person name="Chaudhuri R."/>
            <person name="Henderson I.R."/>
            <person name="Sperandio V."/>
            <person name="Ravel J."/>
        </authorList>
    </citation>
    <scope>NUCLEOTIDE SEQUENCE [LARGE SCALE GENOMIC DNA]</scope>
    <source>
        <strain>HS</strain>
    </source>
</reference>
<feature type="chain" id="PRO_1000062228" description="Biosynthetic peptidoglycan transglycosylase">
    <location>
        <begin position="1"/>
        <end position="242"/>
    </location>
</feature>
<feature type="transmembrane region" description="Helical" evidence="1">
    <location>
        <begin position="19"/>
        <end position="39"/>
    </location>
</feature>
<name>MTGA_ECOHS</name>
<comment type="function">
    <text evidence="1">Peptidoglycan polymerase that catalyzes glycan chain elongation from lipid-linked precursors.</text>
</comment>
<comment type="catalytic activity">
    <reaction evidence="1">
        <text>[GlcNAc-(1-&gt;4)-Mur2Ac(oyl-L-Ala-gamma-D-Glu-L-Lys-D-Ala-D-Ala)](n)-di-trans,octa-cis-undecaprenyl diphosphate + beta-D-GlcNAc-(1-&gt;4)-Mur2Ac(oyl-L-Ala-gamma-D-Glu-L-Lys-D-Ala-D-Ala)-di-trans,octa-cis-undecaprenyl diphosphate = [GlcNAc-(1-&gt;4)-Mur2Ac(oyl-L-Ala-gamma-D-Glu-L-Lys-D-Ala-D-Ala)](n+1)-di-trans,octa-cis-undecaprenyl diphosphate + di-trans,octa-cis-undecaprenyl diphosphate + H(+)</text>
        <dbReference type="Rhea" id="RHEA:23708"/>
        <dbReference type="Rhea" id="RHEA-COMP:9602"/>
        <dbReference type="Rhea" id="RHEA-COMP:9603"/>
        <dbReference type="ChEBI" id="CHEBI:15378"/>
        <dbReference type="ChEBI" id="CHEBI:58405"/>
        <dbReference type="ChEBI" id="CHEBI:60033"/>
        <dbReference type="ChEBI" id="CHEBI:78435"/>
        <dbReference type="EC" id="2.4.99.28"/>
    </reaction>
</comment>
<comment type="pathway">
    <text evidence="1">Cell wall biogenesis; peptidoglycan biosynthesis.</text>
</comment>
<comment type="subcellular location">
    <subcellularLocation>
        <location evidence="1">Cell inner membrane</location>
        <topology evidence="1">Single-pass membrane protein</topology>
    </subcellularLocation>
</comment>
<comment type="similarity">
    <text evidence="1">Belongs to the glycosyltransferase 51 family.</text>
</comment>
<accession>A8A523</accession>
<gene>
    <name evidence="1" type="primary">mtgA</name>
    <name type="ordered locus">EcHS_A3401</name>
</gene>
<dbReference type="EC" id="2.4.99.28" evidence="1"/>
<dbReference type="EMBL" id="CP000802">
    <property type="protein sequence ID" value="ABV07627.1"/>
    <property type="molecule type" value="Genomic_DNA"/>
</dbReference>
<dbReference type="RefSeq" id="WP_000047091.1">
    <property type="nucleotide sequence ID" value="NC_009800.1"/>
</dbReference>
<dbReference type="SMR" id="A8A523"/>
<dbReference type="CAZy" id="GT51">
    <property type="family name" value="Glycosyltransferase Family 51"/>
</dbReference>
<dbReference type="GeneID" id="75206064"/>
<dbReference type="KEGG" id="ecx:EcHS_A3401"/>
<dbReference type="HOGENOM" id="CLU_006354_1_1_6"/>
<dbReference type="UniPathway" id="UPA00219"/>
<dbReference type="GO" id="GO:0009274">
    <property type="term" value="C:peptidoglycan-based cell wall"/>
    <property type="evidence" value="ECO:0007669"/>
    <property type="project" value="InterPro"/>
</dbReference>
<dbReference type="GO" id="GO:0005886">
    <property type="term" value="C:plasma membrane"/>
    <property type="evidence" value="ECO:0007669"/>
    <property type="project" value="UniProtKB-SubCell"/>
</dbReference>
<dbReference type="GO" id="GO:0016763">
    <property type="term" value="F:pentosyltransferase activity"/>
    <property type="evidence" value="ECO:0007669"/>
    <property type="project" value="InterPro"/>
</dbReference>
<dbReference type="GO" id="GO:0008955">
    <property type="term" value="F:peptidoglycan glycosyltransferase activity"/>
    <property type="evidence" value="ECO:0007669"/>
    <property type="project" value="UniProtKB-UniRule"/>
</dbReference>
<dbReference type="GO" id="GO:0071555">
    <property type="term" value="P:cell wall organization"/>
    <property type="evidence" value="ECO:0007669"/>
    <property type="project" value="UniProtKB-KW"/>
</dbReference>
<dbReference type="GO" id="GO:0009252">
    <property type="term" value="P:peptidoglycan biosynthetic process"/>
    <property type="evidence" value="ECO:0007669"/>
    <property type="project" value="UniProtKB-UniRule"/>
</dbReference>
<dbReference type="GO" id="GO:0008360">
    <property type="term" value="P:regulation of cell shape"/>
    <property type="evidence" value="ECO:0007669"/>
    <property type="project" value="UniProtKB-KW"/>
</dbReference>
<dbReference type="FunFam" id="1.10.3810.10:FF:000004">
    <property type="entry name" value="Biosynthetic peptidoglycan transglycosylase"/>
    <property type="match status" value="1"/>
</dbReference>
<dbReference type="Gene3D" id="1.10.3810.10">
    <property type="entry name" value="Biosynthetic peptidoglycan transglycosylase-like"/>
    <property type="match status" value="1"/>
</dbReference>
<dbReference type="HAMAP" id="MF_00766">
    <property type="entry name" value="PGT_MtgA"/>
    <property type="match status" value="1"/>
</dbReference>
<dbReference type="InterPro" id="IPR001264">
    <property type="entry name" value="Glyco_trans_51"/>
</dbReference>
<dbReference type="InterPro" id="IPR023346">
    <property type="entry name" value="Lysozyme-like_dom_sf"/>
</dbReference>
<dbReference type="InterPro" id="IPR036950">
    <property type="entry name" value="PBP_transglycosylase"/>
</dbReference>
<dbReference type="InterPro" id="IPR011812">
    <property type="entry name" value="Pep_trsgly"/>
</dbReference>
<dbReference type="NCBIfam" id="TIGR02070">
    <property type="entry name" value="mono_pep_trsgly"/>
    <property type="match status" value="1"/>
</dbReference>
<dbReference type="PANTHER" id="PTHR30400:SF0">
    <property type="entry name" value="BIOSYNTHETIC PEPTIDOGLYCAN TRANSGLYCOSYLASE"/>
    <property type="match status" value="1"/>
</dbReference>
<dbReference type="PANTHER" id="PTHR30400">
    <property type="entry name" value="MONOFUNCTIONAL BIOSYNTHETIC PEPTIDOGLYCAN TRANSGLYCOSYLASE"/>
    <property type="match status" value="1"/>
</dbReference>
<dbReference type="Pfam" id="PF00912">
    <property type="entry name" value="Transgly"/>
    <property type="match status" value="1"/>
</dbReference>
<dbReference type="SUPFAM" id="SSF53955">
    <property type="entry name" value="Lysozyme-like"/>
    <property type="match status" value="1"/>
</dbReference>
<organism>
    <name type="scientific">Escherichia coli O9:H4 (strain HS)</name>
    <dbReference type="NCBI Taxonomy" id="331112"/>
    <lineage>
        <taxon>Bacteria</taxon>
        <taxon>Pseudomonadati</taxon>
        <taxon>Pseudomonadota</taxon>
        <taxon>Gammaproteobacteria</taxon>
        <taxon>Enterobacterales</taxon>
        <taxon>Enterobacteriaceae</taxon>
        <taxon>Escherichia</taxon>
    </lineage>
</organism>
<sequence length="242" mass="27342">MSKSRLTVFSFVRRFLLRLMVVLAVFWGGGIALFSVAPVPFSAVMVERQVSAWLHGNFRYVAHSDWVSMDQISPWMGLAVIAAEDQKFPEHWGFDVASIEKALAHNERNENRIRGASTISQQTAKNLFLWDGRSWVRKGLEAGLTLGIETVWSKKRILTVYLNIAEFGDGVFGVEAAAQRYFHKPASKLTRSEAALLAAVLPNPLRFKVSSPSGYVRSRQAWILRQMYQLGGEPFMQQHQLD</sequence>
<evidence type="ECO:0000255" key="1">
    <source>
        <dbReference type="HAMAP-Rule" id="MF_00766"/>
    </source>
</evidence>
<protein>
    <recommendedName>
        <fullName evidence="1">Biosynthetic peptidoglycan transglycosylase</fullName>
        <ecNumber evidence="1">2.4.99.28</ecNumber>
    </recommendedName>
    <alternativeName>
        <fullName evidence="1">Glycan polymerase</fullName>
    </alternativeName>
    <alternativeName>
        <fullName evidence="1">Peptidoglycan glycosyltransferase MtgA</fullName>
        <shortName evidence="1">PGT</shortName>
    </alternativeName>
</protein>
<keyword id="KW-0997">Cell inner membrane</keyword>
<keyword id="KW-1003">Cell membrane</keyword>
<keyword id="KW-0133">Cell shape</keyword>
<keyword id="KW-0961">Cell wall biogenesis/degradation</keyword>
<keyword id="KW-0328">Glycosyltransferase</keyword>
<keyword id="KW-0472">Membrane</keyword>
<keyword id="KW-0573">Peptidoglycan synthesis</keyword>
<keyword id="KW-0808">Transferase</keyword>
<keyword id="KW-0812">Transmembrane</keyword>
<keyword id="KW-1133">Transmembrane helix</keyword>
<proteinExistence type="inferred from homology"/>